<proteinExistence type="evidence at protein level"/>
<sequence length="615" mass="67751">MAALVTSQLATSGTVLSVTDRFRRPGFQGLRPRNPADAALGMRTVGASAAPKQSRKPHRFDRRCLSMVVRATGSGGMNLVFVGAEMAPWSKTGGLGDVLGGLPAAMAANGHRVMVISPRYDQYKDAWDTSVISEIKVVDRYERVRYFHCYKRGVDRVFVDHPCFLEKVRGKTKEKIYGPDAGTDYEDNQQRFSLLCQAALEVPRILDLNNNPHFSGPYAMLCRAVPRRAGEDVVFVCNDWHTGLLACYLKSNYQSNGIYRTAKVAFCIHNISYQGRFSFDDFAQLNLPDRFKSSFDFIDGYDKPVEGRKINWMKAGILQADKVLTVSPYYAEELISGEARGCELDNIMRLTGITGIVNGMDVSEWDPIKDKFLTVNYDVTTALEGKALNKEALQAEVGLPVDRKVPLVAFIGRLEEQKGPDVMIAAIPEIVKEEDVQIVLLGTGKKKFERLLKSVEEKFPTKVRAVVRFNAPLAHQMMAGADVLAVTSRFEPCGLIQLQGMRYGTPCACASTGGLVDTIVEGKTGFHMGRLSVDCNVVEPADVKKVVTTLKRAVKVVGTPAYHEMVKNCMIQDLSWKGPAKNWEDVLLELGVEGSEPGIVGEEIAPLALENVAAP</sequence>
<gene>
    <name type="primary">WAXY</name>
</gene>
<feature type="transit peptide" description="Chloroplast" evidence="3">
    <location>
        <begin position="1"/>
        <end position="70"/>
    </location>
</feature>
<feature type="chain" id="PRO_0000011136" description="Granule-bound starch synthase 1, chloroplastic/amyloplastic">
    <location>
        <begin position="71"/>
        <end position="615"/>
    </location>
</feature>
<feature type="binding site" evidence="1">
    <location>
        <position position="91"/>
    </location>
    <ligand>
        <name>ADP-alpha-D-glucose</name>
        <dbReference type="ChEBI" id="CHEBI:57498"/>
    </ligand>
</feature>
<keyword id="KW-0035">Amyloplast</keyword>
<keyword id="KW-0150">Chloroplast</keyword>
<keyword id="KW-0903">Direct protein sequencing</keyword>
<keyword id="KW-0328">Glycosyltransferase</keyword>
<keyword id="KW-0934">Plastid</keyword>
<keyword id="KW-1185">Reference proteome</keyword>
<keyword id="KW-0750">Starch biosynthesis</keyword>
<keyword id="KW-0808">Transferase</keyword>
<keyword id="KW-0809">Transit peptide</keyword>
<dbReference type="EC" id="2.4.1.242"/>
<dbReference type="EMBL" id="X57233">
    <property type="protein sequence ID" value="CAA40509.1"/>
    <property type="molecule type" value="mRNA"/>
</dbReference>
<dbReference type="EMBL" id="AY050174">
    <property type="protein sequence ID" value="AAL05405.1"/>
    <property type="molecule type" value="mRNA"/>
</dbReference>
<dbReference type="PIR" id="S16261">
    <property type="entry name" value="YUWTY"/>
</dbReference>
<dbReference type="SMR" id="P27736"/>
<dbReference type="STRING" id="4565.P27736"/>
<dbReference type="CAZy" id="GT5">
    <property type="family name" value="Glycosyltransferase Family 5"/>
</dbReference>
<dbReference type="PaxDb" id="4565-Traes_4AL_4B9D56131.3"/>
<dbReference type="eggNOG" id="ENOG502QQX3">
    <property type="taxonomic scope" value="Eukaryota"/>
</dbReference>
<dbReference type="BRENDA" id="2.4.1.242">
    <property type="organism ID" value="6500"/>
</dbReference>
<dbReference type="UniPathway" id="UPA00152"/>
<dbReference type="Proteomes" id="UP000019116">
    <property type="component" value="Unplaced"/>
</dbReference>
<dbReference type="ExpressionAtlas" id="P27736">
    <property type="expression patterns" value="baseline and differential"/>
</dbReference>
<dbReference type="GO" id="GO:0009501">
    <property type="term" value="C:amyloplast"/>
    <property type="evidence" value="ECO:0007669"/>
    <property type="project" value="UniProtKB-SubCell"/>
</dbReference>
<dbReference type="GO" id="GO:0009507">
    <property type="term" value="C:chloroplast"/>
    <property type="evidence" value="ECO:0007669"/>
    <property type="project" value="UniProtKB-SubCell"/>
</dbReference>
<dbReference type="GO" id="GO:0004373">
    <property type="term" value="F:alpha-1,4-glucan glucosyltransferase (UDP-glucose donor) activity"/>
    <property type="evidence" value="ECO:0007669"/>
    <property type="project" value="InterPro"/>
</dbReference>
<dbReference type="GO" id="GO:0019252">
    <property type="term" value="P:starch biosynthetic process"/>
    <property type="evidence" value="ECO:0007669"/>
    <property type="project" value="UniProtKB-UniPathway"/>
</dbReference>
<dbReference type="CDD" id="cd03791">
    <property type="entry name" value="GT5_Glycogen_synthase_DULL1-like"/>
    <property type="match status" value="1"/>
</dbReference>
<dbReference type="FunFam" id="3.40.50.2000:FF:000073">
    <property type="entry name" value="Starch synthase, chloroplastic/amyloplastic"/>
    <property type="match status" value="1"/>
</dbReference>
<dbReference type="FunFam" id="3.40.50.2000:FF:000090">
    <property type="entry name" value="Starch synthase, chloroplastic/amyloplastic"/>
    <property type="match status" value="1"/>
</dbReference>
<dbReference type="Gene3D" id="3.40.50.2000">
    <property type="entry name" value="Glycogen Phosphorylase B"/>
    <property type="match status" value="2"/>
</dbReference>
<dbReference type="HAMAP" id="MF_00484">
    <property type="entry name" value="Glycogen_synth"/>
    <property type="match status" value="1"/>
</dbReference>
<dbReference type="InterPro" id="IPR001296">
    <property type="entry name" value="Glyco_trans_1"/>
</dbReference>
<dbReference type="InterPro" id="IPR011835">
    <property type="entry name" value="GS/SS"/>
</dbReference>
<dbReference type="InterPro" id="IPR013534">
    <property type="entry name" value="Starch_synth_cat_dom"/>
</dbReference>
<dbReference type="NCBIfam" id="TIGR02095">
    <property type="entry name" value="glgA"/>
    <property type="match status" value="1"/>
</dbReference>
<dbReference type="PANTHER" id="PTHR45825">
    <property type="entry name" value="GRANULE-BOUND STARCH SYNTHASE 1, CHLOROPLASTIC/AMYLOPLASTIC"/>
    <property type="match status" value="1"/>
</dbReference>
<dbReference type="PANTHER" id="PTHR45825:SF3">
    <property type="entry name" value="GRANULE-BOUND STARCH SYNTHASE 1, CHLOROPLASTIC_AMYLOPLASTIC"/>
    <property type="match status" value="1"/>
</dbReference>
<dbReference type="Pfam" id="PF08323">
    <property type="entry name" value="Glyco_transf_5"/>
    <property type="match status" value="1"/>
</dbReference>
<dbReference type="Pfam" id="PF00534">
    <property type="entry name" value="Glycos_transf_1"/>
    <property type="match status" value="1"/>
</dbReference>
<dbReference type="SUPFAM" id="SSF53756">
    <property type="entry name" value="UDP-Glycosyltransferase/glycogen phosphorylase"/>
    <property type="match status" value="1"/>
</dbReference>
<organism>
    <name type="scientific">Triticum aestivum</name>
    <name type="common">Wheat</name>
    <dbReference type="NCBI Taxonomy" id="4565"/>
    <lineage>
        <taxon>Eukaryota</taxon>
        <taxon>Viridiplantae</taxon>
        <taxon>Streptophyta</taxon>
        <taxon>Embryophyta</taxon>
        <taxon>Tracheophyta</taxon>
        <taxon>Spermatophyta</taxon>
        <taxon>Magnoliopsida</taxon>
        <taxon>Liliopsida</taxon>
        <taxon>Poales</taxon>
        <taxon>Poaceae</taxon>
        <taxon>BOP clade</taxon>
        <taxon>Pooideae</taxon>
        <taxon>Triticodae</taxon>
        <taxon>Triticeae</taxon>
        <taxon>Triticinae</taxon>
        <taxon>Triticum</taxon>
    </lineage>
</organism>
<reference key="1">
    <citation type="journal article" date="1991" name="Plant Mol. Biol.">
        <title>Nucleotide sequence of a wheat (Triticum aestivum L.) cDNA clone encoding the waxy protein.</title>
        <authorList>
            <person name="Clark J.R."/>
            <person name="Robertson M."/>
            <person name="Ainsworth C.C."/>
        </authorList>
    </citation>
    <scope>NUCLEOTIDE SEQUENCE [MRNA]</scope>
    <source>
        <tissue>Endosperm</tissue>
    </source>
</reference>
<reference key="2">
    <citation type="journal article" date="2002" name="Plant Mol. Biol.">
        <title>5' deletion of a gbss1 promoter region from wheat leads to changes in tissue and developmental specificities.</title>
        <authorList>
            <person name="Kluth A."/>
            <person name="Sprunck S."/>
            <person name="Becker D."/>
            <person name="Loerz H."/>
            <person name="Luetticke S."/>
        </authorList>
    </citation>
    <scope>NUCLEOTIDE SEQUENCE [MRNA]</scope>
    <scope>TISSUE SPECIFICITY</scope>
    <source>
        <strain>cv. Florida</strain>
        <tissue>Kernel</tissue>
    </source>
</reference>
<reference key="3">
    <citation type="journal article" date="1993" name="Plant Mol. Biol.">
        <title>Expression, organisation and structure of the genes encoding the waxy protein (granule-bound starch synthase) in wheat.</title>
        <authorList>
            <person name="Ainsworth C."/>
            <person name="Clark J."/>
            <person name="Balsdon J."/>
        </authorList>
    </citation>
    <scope>PROTEIN SEQUENCE OF 71-78</scope>
    <source>
        <strain>cv. Chinese Spring</strain>
    </source>
</reference>
<name>SSG1_WHEAT</name>
<protein>
    <recommendedName>
        <fullName>Granule-bound starch synthase 1, chloroplastic/amyloplastic</fullName>
        <ecNumber>2.4.1.242</ecNumber>
    </recommendedName>
    <alternativeName>
        <fullName>Granule-bound starch synthase I</fullName>
        <shortName>GBSS-I</shortName>
    </alternativeName>
</protein>
<comment type="catalytic activity">
    <reaction>
        <text>an NDP-alpha-D-glucose + [(1-&gt;4)-alpha-D-glucosyl](n) = [(1-&gt;4)-alpha-D-glucosyl](n+1) + a ribonucleoside 5'-diphosphate + H(+)</text>
        <dbReference type="Rhea" id="RHEA:15873"/>
        <dbReference type="Rhea" id="RHEA-COMP:9584"/>
        <dbReference type="Rhea" id="RHEA-COMP:9587"/>
        <dbReference type="ChEBI" id="CHEBI:15378"/>
        <dbReference type="ChEBI" id="CHEBI:15444"/>
        <dbReference type="ChEBI" id="CHEBI:57930"/>
        <dbReference type="ChEBI" id="CHEBI:76533"/>
        <dbReference type="EC" id="2.4.1.242"/>
    </reaction>
</comment>
<comment type="pathway">
    <text>Glycan biosynthesis; starch biosynthesis.</text>
</comment>
<comment type="subcellular location">
    <subcellularLocation>
        <location>Plastid</location>
        <location>Chloroplast</location>
    </subcellularLocation>
    <subcellularLocation>
        <location>Plastid</location>
        <location>Amyloplast</location>
    </subcellularLocation>
    <text>Amyloplast or chloroplast, granule-bound.</text>
</comment>
<comment type="tissue specificity">
    <text evidence="2">Found in seeds and pollen.</text>
</comment>
<comment type="developmental stage">
    <text>Expressed during the grain filling process.</text>
</comment>
<comment type="similarity">
    <text evidence="4">Belongs to the glycosyltransferase 1 family. Bacterial/plant glycogen synthase subfamily.</text>
</comment>
<evidence type="ECO:0000250" key="1"/>
<evidence type="ECO:0000269" key="2">
    <source>
    </source>
</evidence>
<evidence type="ECO:0000269" key="3">
    <source>
    </source>
</evidence>
<evidence type="ECO:0000305" key="4"/>
<accession>P27736</accession>